<comment type="function">
    <text evidence="2">Strongly binds and inhibits lysozyme, may help bacteria survive in lysozyme-producing host cells. When overexpressed in M.tuberculosis or M.smegmatis increases resistance to hen egg white lysozyme. M.smegmatis overexpressing LprI survive better during intracellular infection of peritoneal and monocyte-derived macrophages, both of which produce lysozyme during infection; M.smegmatis does not encode this protein. Somewhat better survival is seen in human cell lines when M.smegmatis cells express both proteins from this operon, i.e. GlbN (HbN) and LprI.</text>
</comment>
<comment type="subunit">
    <text evidence="5">Homodimer.</text>
</comment>
<comment type="subcellular location">
    <subcellularLocation>
        <location evidence="1 2">Cell membrane</location>
        <topology evidence="1 5">Lipid-anchor</topology>
    </subcellularLocation>
    <subcellularLocation>
        <location evidence="2">Secreted</location>
        <location evidence="2">Cell wall</location>
    </subcellularLocation>
    <subcellularLocation>
        <location evidence="2">Cell surface</location>
    </subcellularLocation>
    <text evidence="2">Protein is accessible to externally added trypsin and alpha-D-mannosidase.</text>
</comment>
<comment type="induction">
    <text evidence="2">Constitutively expressed, increases in stationary phase (at protein level). mRNA levels rise nearly 50-fold during mouse macrophage infection. Part of the glbN-lprI operon.</text>
</comment>
<comment type="PTM">
    <text evidence="2">Glycosylated; alpha-D-mannosidase treatment decreases its apparent molecular weight. Glycosylation probably helps target protein to the cell surface; mutation of predicted glycosylation sites (Thr-24, Thr-28 and/or Thr-117) makes protein partially inaccesible to externally added trypsin. May also be glycosylated on other residues. Glycosylation is probably not necessary for inhibition of lysozyme.</text>
</comment>
<comment type="disruption phenotype">
    <text evidence="2">Probably essential, it cannot be deleted.</text>
</comment>
<comment type="similarity">
    <text evidence="4">In the C-terminal section; belongs to the MliC family.</text>
</comment>
<organism>
    <name type="scientific">Mycobacterium tuberculosis (strain ATCC 25618 / H37Rv)</name>
    <dbReference type="NCBI Taxonomy" id="83332"/>
    <lineage>
        <taxon>Bacteria</taxon>
        <taxon>Bacillati</taxon>
        <taxon>Actinomycetota</taxon>
        <taxon>Actinomycetes</taxon>
        <taxon>Mycobacteriales</taxon>
        <taxon>Mycobacteriaceae</taxon>
        <taxon>Mycobacterium</taxon>
        <taxon>Mycobacterium tuberculosis complex</taxon>
    </lineage>
</organism>
<name>LPRI_MYCTU</name>
<keyword id="KW-1003">Cell membrane</keyword>
<keyword id="KW-0134">Cell wall</keyword>
<keyword id="KW-0325">Glycoprotein</keyword>
<keyword id="KW-0449">Lipoprotein</keyword>
<keyword id="KW-0472">Membrane</keyword>
<keyword id="KW-0564">Palmitate</keyword>
<keyword id="KW-1185">Reference proteome</keyword>
<keyword id="KW-0964">Secreted</keyword>
<keyword id="KW-0732">Signal</keyword>
<dbReference type="EMBL" id="AL123456">
    <property type="protein sequence ID" value="CCP44305.1"/>
    <property type="molecule type" value="Genomic_DNA"/>
</dbReference>
<dbReference type="PIR" id="B70761">
    <property type="entry name" value="B70761"/>
</dbReference>
<dbReference type="RefSeq" id="NP_216057.1">
    <property type="nucleotide sequence ID" value="NC_000962.3"/>
</dbReference>
<dbReference type="RefSeq" id="WP_003407725.1">
    <property type="nucleotide sequence ID" value="NZ_NVQJ01000004.1"/>
</dbReference>
<dbReference type="SMR" id="P9WK41"/>
<dbReference type="STRING" id="83332.Rv1541c"/>
<dbReference type="PaxDb" id="83332-Rv1541c"/>
<dbReference type="DNASU" id="886406"/>
<dbReference type="GeneID" id="886406"/>
<dbReference type="KEGG" id="mtu:Rv1541c"/>
<dbReference type="KEGG" id="mtv:RVBD_1541c"/>
<dbReference type="TubercuList" id="Rv1541c"/>
<dbReference type="eggNOG" id="COG4461">
    <property type="taxonomic scope" value="Bacteria"/>
</dbReference>
<dbReference type="InParanoid" id="P9WK41"/>
<dbReference type="OrthoDB" id="5565855at2"/>
<dbReference type="PhylomeDB" id="P9WK41"/>
<dbReference type="Proteomes" id="UP000001584">
    <property type="component" value="Chromosome"/>
</dbReference>
<dbReference type="GO" id="GO:0009986">
    <property type="term" value="C:cell surface"/>
    <property type="evidence" value="ECO:0007669"/>
    <property type="project" value="UniProtKB-SubCell"/>
</dbReference>
<dbReference type="GO" id="GO:0005576">
    <property type="term" value="C:extracellular region"/>
    <property type="evidence" value="ECO:0007005"/>
    <property type="project" value="MTBBASE"/>
</dbReference>
<dbReference type="GO" id="GO:0005886">
    <property type="term" value="C:plasma membrane"/>
    <property type="evidence" value="ECO:0007669"/>
    <property type="project" value="UniProtKB-SubCell"/>
</dbReference>
<dbReference type="Gene3D" id="1.20.1270.180">
    <property type="match status" value="1"/>
</dbReference>
<dbReference type="Gene3D" id="2.40.128.200">
    <property type="match status" value="1"/>
</dbReference>
<dbReference type="InterPro" id="IPR009739">
    <property type="entry name" value="LprI-like_N"/>
</dbReference>
<dbReference type="InterPro" id="IPR052755">
    <property type="entry name" value="Lysozyme_Inhibitor_LprI"/>
</dbReference>
<dbReference type="InterPro" id="IPR018660">
    <property type="entry name" value="MliC"/>
</dbReference>
<dbReference type="InterPro" id="IPR036328">
    <property type="entry name" value="MliC_sf"/>
</dbReference>
<dbReference type="PANTHER" id="PTHR37549">
    <property type="entry name" value="LIPOPROTEIN LPRI"/>
    <property type="match status" value="1"/>
</dbReference>
<dbReference type="PANTHER" id="PTHR37549:SF1">
    <property type="entry name" value="LIPOPROTEIN LPRI"/>
    <property type="match status" value="1"/>
</dbReference>
<dbReference type="Pfam" id="PF07007">
    <property type="entry name" value="LprI"/>
    <property type="match status" value="1"/>
</dbReference>
<dbReference type="Pfam" id="PF09864">
    <property type="entry name" value="MliC"/>
    <property type="match status" value="1"/>
</dbReference>
<dbReference type="SUPFAM" id="SSF141488">
    <property type="entry name" value="YdhA-like"/>
    <property type="match status" value="1"/>
</dbReference>
<dbReference type="PROSITE" id="PS51257">
    <property type="entry name" value="PROKAR_LIPOPROTEIN"/>
    <property type="match status" value="1"/>
</dbReference>
<accession>P9WK41</accession>
<accession>L0T8K2</accession>
<accession>P65318</accession>
<accession>Q10785</accession>
<protein>
    <recommendedName>
        <fullName evidence="3">Lipoprotein LprI</fullName>
    </recommendedName>
    <alternativeName>
        <fullName evidence="4">Glycolipoprotein LprI</fullName>
    </alternativeName>
    <alternativeName>
        <fullName evidence="3">Lysozyme inhibitor LprI</fullName>
    </alternativeName>
</protein>
<evidence type="ECO:0000255" key="1">
    <source>
        <dbReference type="PROSITE-ProRule" id="PRU00303"/>
    </source>
</evidence>
<evidence type="ECO:0000269" key="2">
    <source>
    </source>
</evidence>
<evidence type="ECO:0000303" key="3">
    <source>
    </source>
</evidence>
<evidence type="ECO:0000305" key="4"/>
<evidence type="ECO:0000305" key="5">
    <source>
    </source>
</evidence>
<sequence>MRWIGVLVTALVLSACAANPPANTTSPTAGQSLDCTKPATIVQQLVCHDRQLTSLDHRLSTAYQQALAHRRSAALEAAQSSWTMLRDACAQDTDPRTCVQEAYQTRLVQLAIADPATATPPVLTYRCPTQDGPLTAQFYNQFDPKTAVLNWKGDQVIVFVELSGSGARYGRQGIEYWEHQGEVRLDFHGATFVCRTS</sequence>
<proteinExistence type="evidence at protein level"/>
<reference key="1">
    <citation type="journal article" date="1998" name="Nature">
        <title>Deciphering the biology of Mycobacterium tuberculosis from the complete genome sequence.</title>
        <authorList>
            <person name="Cole S.T."/>
            <person name="Brosch R."/>
            <person name="Parkhill J."/>
            <person name="Garnier T."/>
            <person name="Churcher C.M."/>
            <person name="Harris D.E."/>
            <person name="Gordon S.V."/>
            <person name="Eiglmeier K."/>
            <person name="Gas S."/>
            <person name="Barry C.E. III"/>
            <person name="Tekaia F."/>
            <person name="Badcock K."/>
            <person name="Basham D."/>
            <person name="Brown D."/>
            <person name="Chillingworth T."/>
            <person name="Connor R."/>
            <person name="Davies R.M."/>
            <person name="Devlin K."/>
            <person name="Feltwell T."/>
            <person name="Gentles S."/>
            <person name="Hamlin N."/>
            <person name="Holroyd S."/>
            <person name="Hornsby T."/>
            <person name="Jagels K."/>
            <person name="Krogh A."/>
            <person name="McLean J."/>
            <person name="Moule S."/>
            <person name="Murphy L.D."/>
            <person name="Oliver S."/>
            <person name="Osborne J."/>
            <person name="Quail M.A."/>
            <person name="Rajandream M.A."/>
            <person name="Rogers J."/>
            <person name="Rutter S."/>
            <person name="Seeger K."/>
            <person name="Skelton S."/>
            <person name="Squares S."/>
            <person name="Squares R."/>
            <person name="Sulston J.E."/>
            <person name="Taylor K."/>
            <person name="Whitehead S."/>
            <person name="Barrell B.G."/>
        </authorList>
    </citation>
    <scope>NUCLEOTIDE SEQUENCE [LARGE SCALE GENOMIC DNA]</scope>
    <source>
        <strain>ATCC 25618 / H37Rv</strain>
    </source>
</reference>
<reference key="2">
    <citation type="journal article" date="2016" name="J. Biol. Chem.">
        <title>Lipoprotein LprI of Mycobacterium tuberculosis acts as a lysozyme inhibitor.</title>
        <authorList>
            <person name="Sethi D."/>
            <person name="Mahajan S."/>
            <person name="Singh C."/>
            <person name="Lama A."/>
            <person name="Hade M.D."/>
            <person name="Gupta P."/>
            <person name="Dikshit K.L."/>
        </authorList>
    </citation>
    <scope>FUNCTION</scope>
    <scope>SUBUNIT</scope>
    <scope>SUBCELLULAR LOCATION</scope>
    <scope>INDUCTION</scope>
    <scope>LIPIDATION</scope>
    <scope>GLYCOSYLATION</scope>
    <scope>DISRUPTION PHENOTYPE</scope>
    <scope>MUTAGENESIS OF THR-24; THR-28 AND THR-117</scope>
    <source>
        <strain>ATCC 25177 / H37Ra</strain>
        <strain>H37Rv</strain>
    </source>
</reference>
<feature type="signal peptide" evidence="1">
    <location>
        <begin position="1"/>
        <end position="15"/>
    </location>
</feature>
<feature type="chain" id="PRO_0000018150" description="Lipoprotein LprI">
    <location>
        <begin position="16"/>
        <end position="197"/>
    </location>
</feature>
<feature type="lipid moiety-binding region" description="N-palmitoyl cysteine" evidence="1">
    <location>
        <position position="16"/>
    </location>
</feature>
<feature type="lipid moiety-binding region" description="S-diacylglycerol cysteine" evidence="1">
    <location>
        <position position="16"/>
    </location>
</feature>
<feature type="mutagenesis site" description="Decreased apparent weight in M.smegmatis, a portion of the protein is protected from extracellular trypsin." evidence="2">
    <original>T</original>
    <variation>A</variation>
    <location>
        <position position="24"/>
    </location>
</feature>
<feature type="mutagenesis site" description="Decreased apparent weight in M.smegmatis, a portion of the protein is protected from extracellular trypsin." evidence="2">
    <original>T</original>
    <variation>A</variation>
    <location>
        <position position="28"/>
    </location>
</feature>
<feature type="mutagenesis site" description="Decreased apparent weight in M.smegmatis, a portion of the protein is protected from extracellular trypsin." evidence="2">
    <original>T</original>
    <variation>A</variation>
    <location>
        <position position="117"/>
    </location>
</feature>
<gene>
    <name type="primary">lprI</name>
    <name type="ordered locus">Rv1541c</name>
    <name type="ORF">MTCY48.24</name>
</gene>